<accession>P61714</accession>
<accession>P25540</accession>
<accession>P77114</accession>
<accession>Q2MC11</accession>
<sequence length="156" mass="16157">MNIIEANVATPDARVAITIARFNNFINDSLLEGAIDALKRIGQVKDENITVVWVPGAYELPLAAGALAKTGKYDAVIALGTVIRGGTAHFEYVAGGASNGLAHVAQDSEIPVAFGVLTTESIEQAIERAGTKAGNKGAEAALTALEMINVLKAIKA</sequence>
<dbReference type="EC" id="2.5.1.78"/>
<dbReference type="EMBL" id="X64395">
    <property type="protein sequence ID" value="CAA45736.1"/>
    <property type="molecule type" value="Genomic_DNA"/>
</dbReference>
<dbReference type="EMBL" id="U82664">
    <property type="protein sequence ID" value="AAB40171.1"/>
    <property type="molecule type" value="Genomic_DNA"/>
</dbReference>
<dbReference type="EMBL" id="U00096">
    <property type="protein sequence ID" value="AAC73518.1"/>
    <property type="molecule type" value="Genomic_DNA"/>
</dbReference>
<dbReference type="EMBL" id="AP009048">
    <property type="protein sequence ID" value="BAE76195.1"/>
    <property type="molecule type" value="Genomic_DNA"/>
</dbReference>
<dbReference type="PIR" id="S26202">
    <property type="entry name" value="S26202"/>
</dbReference>
<dbReference type="RefSeq" id="NP_414949.1">
    <property type="nucleotide sequence ID" value="NC_000913.3"/>
</dbReference>
<dbReference type="RefSeq" id="WP_001021161.1">
    <property type="nucleotide sequence ID" value="NZ_STEB01000007.1"/>
</dbReference>
<dbReference type="SMR" id="P61714"/>
<dbReference type="BioGRID" id="4259505">
    <property type="interactions" value="94"/>
</dbReference>
<dbReference type="DIP" id="DIP-10711N"/>
<dbReference type="FunCoup" id="P61714">
    <property type="interactions" value="791"/>
</dbReference>
<dbReference type="IntAct" id="P61714">
    <property type="interactions" value="16"/>
</dbReference>
<dbReference type="STRING" id="511145.b0415"/>
<dbReference type="jPOST" id="P61714"/>
<dbReference type="PaxDb" id="511145-b0415"/>
<dbReference type="EnsemblBacteria" id="AAC73518">
    <property type="protein sequence ID" value="AAC73518"/>
    <property type="gene ID" value="b0415"/>
</dbReference>
<dbReference type="GeneID" id="946453"/>
<dbReference type="GeneID" id="98391920"/>
<dbReference type="KEGG" id="ecj:JW0405"/>
<dbReference type="KEGG" id="eco:b0415"/>
<dbReference type="KEGG" id="ecoc:C3026_02025"/>
<dbReference type="PATRIC" id="fig|1411691.4.peg.1862"/>
<dbReference type="EchoBASE" id="EB1298"/>
<dbReference type="eggNOG" id="COG0054">
    <property type="taxonomic scope" value="Bacteria"/>
</dbReference>
<dbReference type="HOGENOM" id="CLU_089358_1_1_6"/>
<dbReference type="InParanoid" id="P61714"/>
<dbReference type="OMA" id="CQGVTQG"/>
<dbReference type="OrthoDB" id="9809709at2"/>
<dbReference type="PhylomeDB" id="P61714"/>
<dbReference type="BioCyc" id="EcoCyc:LUMAZINESYN-MONOMER"/>
<dbReference type="BioCyc" id="MetaCyc:LUMAZINESYN-MONOMER"/>
<dbReference type="SABIO-RK" id="P61714"/>
<dbReference type="UniPathway" id="UPA00275">
    <property type="reaction ID" value="UER00404"/>
</dbReference>
<dbReference type="PRO" id="PR:P61714"/>
<dbReference type="Proteomes" id="UP000000625">
    <property type="component" value="Chromosome"/>
</dbReference>
<dbReference type="GO" id="GO:0005737">
    <property type="term" value="C:cytoplasm"/>
    <property type="evidence" value="ECO:0000318"/>
    <property type="project" value="GO_Central"/>
</dbReference>
<dbReference type="GO" id="GO:0005829">
    <property type="term" value="C:cytosol"/>
    <property type="evidence" value="ECO:0000314"/>
    <property type="project" value="EcoCyc"/>
</dbReference>
<dbReference type="GO" id="GO:0009349">
    <property type="term" value="C:riboflavin synthase complex"/>
    <property type="evidence" value="ECO:0007669"/>
    <property type="project" value="InterPro"/>
</dbReference>
<dbReference type="GO" id="GO:0000906">
    <property type="term" value="F:6,7-dimethyl-8-ribityllumazine synthase activity"/>
    <property type="evidence" value="ECO:0000314"/>
    <property type="project" value="EcoCyc"/>
</dbReference>
<dbReference type="GO" id="GO:0009231">
    <property type="term" value="P:riboflavin biosynthetic process"/>
    <property type="evidence" value="ECO:0000314"/>
    <property type="project" value="EcoCyc"/>
</dbReference>
<dbReference type="CDD" id="cd09209">
    <property type="entry name" value="Lumazine_synthase-I"/>
    <property type="match status" value="1"/>
</dbReference>
<dbReference type="FunFam" id="3.40.50.960:FF:000001">
    <property type="entry name" value="6,7-dimethyl-8-ribityllumazine synthase"/>
    <property type="match status" value="1"/>
</dbReference>
<dbReference type="Gene3D" id="3.40.50.960">
    <property type="entry name" value="Lumazine/riboflavin synthase"/>
    <property type="match status" value="1"/>
</dbReference>
<dbReference type="HAMAP" id="MF_00178">
    <property type="entry name" value="Lumazine_synth"/>
    <property type="match status" value="1"/>
</dbReference>
<dbReference type="InterPro" id="IPR034964">
    <property type="entry name" value="LS"/>
</dbReference>
<dbReference type="InterPro" id="IPR002180">
    <property type="entry name" value="LS/RS"/>
</dbReference>
<dbReference type="InterPro" id="IPR036467">
    <property type="entry name" value="LS/RS_sf"/>
</dbReference>
<dbReference type="NCBIfam" id="TIGR00114">
    <property type="entry name" value="lumazine-synth"/>
    <property type="match status" value="1"/>
</dbReference>
<dbReference type="NCBIfam" id="NF000812">
    <property type="entry name" value="PRK00061.1-4"/>
    <property type="match status" value="1"/>
</dbReference>
<dbReference type="PANTHER" id="PTHR21058:SF0">
    <property type="entry name" value="6,7-DIMETHYL-8-RIBITYLLUMAZINE SYNTHASE"/>
    <property type="match status" value="1"/>
</dbReference>
<dbReference type="PANTHER" id="PTHR21058">
    <property type="entry name" value="6,7-DIMETHYL-8-RIBITYLLUMAZINE SYNTHASE DMRL SYNTHASE LUMAZINE SYNTHASE"/>
    <property type="match status" value="1"/>
</dbReference>
<dbReference type="Pfam" id="PF00885">
    <property type="entry name" value="DMRL_synthase"/>
    <property type="match status" value="1"/>
</dbReference>
<dbReference type="SUPFAM" id="SSF52121">
    <property type="entry name" value="Lumazine synthase"/>
    <property type="match status" value="1"/>
</dbReference>
<gene>
    <name type="primary">ribE</name>
    <name type="synonym">ribH</name>
    <name type="synonym">ybaF</name>
    <name type="ordered locus">b0415</name>
    <name type="ordered locus">JW0405</name>
</gene>
<reference key="1">
    <citation type="journal article" date="1992" name="Mol. Gen. Genet.">
        <title>Insertional disruption of the nusB (ssyB) gene leads to cold-sensitive growth of Escherichia coli and suppression of the secY24 mutation.</title>
        <authorList>
            <person name="Taura T."/>
            <person name="Ueguchi C."/>
            <person name="Shiba K."/>
            <person name="Ito K."/>
        </authorList>
    </citation>
    <scope>NUCLEOTIDE SEQUENCE [GENOMIC DNA]</scope>
    <source>
        <strain>K12</strain>
    </source>
</reference>
<reference key="2">
    <citation type="submission" date="1997-01" db="EMBL/GenBank/DDBJ databases">
        <title>Sequence of minutes 4-25 of Escherichia coli.</title>
        <authorList>
            <person name="Chung E."/>
            <person name="Allen E."/>
            <person name="Araujo R."/>
            <person name="Aparicio A.M."/>
            <person name="Davis K."/>
            <person name="Duncan M."/>
            <person name="Federspiel N."/>
            <person name="Hyman R."/>
            <person name="Kalman S."/>
            <person name="Komp C."/>
            <person name="Kurdi O."/>
            <person name="Lew H."/>
            <person name="Lin D."/>
            <person name="Namath A."/>
            <person name="Oefner P."/>
            <person name="Roberts D."/>
            <person name="Schramm S."/>
            <person name="Davis R.W."/>
        </authorList>
    </citation>
    <scope>NUCLEOTIDE SEQUENCE [LARGE SCALE GENOMIC DNA]</scope>
    <source>
        <strain>K12 / MG1655 / ATCC 47076</strain>
    </source>
</reference>
<reference key="3">
    <citation type="journal article" date="1997" name="Science">
        <title>The complete genome sequence of Escherichia coli K-12.</title>
        <authorList>
            <person name="Blattner F.R."/>
            <person name="Plunkett G. III"/>
            <person name="Bloch C.A."/>
            <person name="Perna N.T."/>
            <person name="Burland V."/>
            <person name="Riley M."/>
            <person name="Collado-Vides J."/>
            <person name="Glasner J.D."/>
            <person name="Rode C.K."/>
            <person name="Mayhew G.F."/>
            <person name="Gregor J."/>
            <person name="Davis N.W."/>
            <person name="Kirkpatrick H.A."/>
            <person name="Goeden M.A."/>
            <person name="Rose D.J."/>
            <person name="Mau B."/>
            <person name="Shao Y."/>
        </authorList>
    </citation>
    <scope>NUCLEOTIDE SEQUENCE [LARGE SCALE GENOMIC DNA]</scope>
    <source>
        <strain>K12 / MG1655 / ATCC 47076</strain>
    </source>
</reference>
<reference key="4">
    <citation type="journal article" date="2006" name="Mol. Syst. Biol.">
        <title>Highly accurate genome sequences of Escherichia coli K-12 strains MG1655 and W3110.</title>
        <authorList>
            <person name="Hayashi K."/>
            <person name="Morooka N."/>
            <person name="Yamamoto Y."/>
            <person name="Fujita K."/>
            <person name="Isono K."/>
            <person name="Choi S."/>
            <person name="Ohtsubo E."/>
            <person name="Baba T."/>
            <person name="Wanner B.L."/>
            <person name="Mori H."/>
            <person name="Horiuchi T."/>
        </authorList>
    </citation>
    <scope>NUCLEOTIDE SEQUENCE [LARGE SCALE GENOMIC DNA]</scope>
    <source>
        <strain>K12 / W3110 / ATCC 27325 / DSM 5911</strain>
    </source>
</reference>
<reference key="5">
    <citation type="journal article" date="1996" name="J. Biol. Chem.">
        <title>Biosynthesis of riboflavin. Lumazine synthase of Escherichia coli.</title>
        <authorList>
            <person name="Moertl S."/>
            <person name="Fischer M."/>
            <person name="Richter G."/>
            <person name="Tack J."/>
            <person name="Weinkauf S."/>
            <person name="Bacher A."/>
        </authorList>
    </citation>
    <scope>FUNCTION</scope>
    <scope>CATALYTIC ACTIVITY</scope>
    <scope>KINETIC PARAMETERS</scope>
    <scope>SUBUNIT</scope>
    <scope>PATHWAY</scope>
    <source>
        <strain>K12 / RR28</strain>
    </source>
</reference>
<evidence type="ECO:0000250" key="1"/>
<evidence type="ECO:0000255" key="2"/>
<evidence type="ECO:0000269" key="3">
    <source>
    </source>
</evidence>
<evidence type="ECO:0000305" key="4"/>
<keyword id="KW-1185">Reference proteome</keyword>
<keyword id="KW-0686">Riboflavin biosynthesis</keyword>
<keyword id="KW-0808">Transferase</keyword>
<organism>
    <name type="scientific">Escherichia coli (strain K12)</name>
    <dbReference type="NCBI Taxonomy" id="83333"/>
    <lineage>
        <taxon>Bacteria</taxon>
        <taxon>Pseudomonadati</taxon>
        <taxon>Pseudomonadota</taxon>
        <taxon>Gammaproteobacteria</taxon>
        <taxon>Enterobacterales</taxon>
        <taxon>Enterobacteriaceae</taxon>
        <taxon>Escherichia</taxon>
    </lineage>
</organism>
<name>RISB_ECOLI</name>
<comment type="function">
    <text evidence="3">Catalyzes the formation of 6,7-dimethyl-8-ribityllumazine by condensation of 5-amino-6-(D-ribitylamino)uracil with 3,4-dihydroxy-2-butanone 4-phosphate. This is the penultimate step in the biosynthesis of riboflavin.</text>
</comment>
<comment type="catalytic activity">
    <reaction evidence="3">
        <text>(2S)-2-hydroxy-3-oxobutyl phosphate + 5-amino-6-(D-ribitylamino)uracil = 6,7-dimethyl-8-(1-D-ribityl)lumazine + phosphate + 2 H2O + H(+)</text>
        <dbReference type="Rhea" id="RHEA:26152"/>
        <dbReference type="ChEBI" id="CHEBI:15377"/>
        <dbReference type="ChEBI" id="CHEBI:15378"/>
        <dbReference type="ChEBI" id="CHEBI:15934"/>
        <dbReference type="ChEBI" id="CHEBI:43474"/>
        <dbReference type="ChEBI" id="CHEBI:58201"/>
        <dbReference type="ChEBI" id="CHEBI:58830"/>
        <dbReference type="EC" id="2.5.1.78"/>
    </reaction>
</comment>
<comment type="biophysicochemical properties">
    <kinetics>
        <KM evidence="3">4.2 uM for 5-amino-6-(D-ribitylamino)uracil</KM>
        <KM evidence="3">62 uM for 3,4-dihydroxy-2-butanone 4-phosphate</KM>
        <Vmax evidence="3">11800.0 nmol/h/mg enzyme</Vmax>
    </kinetics>
</comment>
<comment type="pathway">
    <text evidence="3">Cofactor biosynthesis; riboflavin biosynthesis; riboflavin from 2-hydroxy-3-oxobutyl phosphate and 5-amino-6-(D-ribitylamino)uracil: step 1/2.</text>
</comment>
<comment type="subunit">
    <text evidence="3">Forms a hollow icosahedral capsid composed of 60 subunits, probably arranged as a dodecamer of pentamers. Unlike in B.subtilis, does not interact with riboflavin synthase, and the core of the icosahedral capsid is empty.</text>
</comment>
<comment type="similarity">
    <text evidence="4">Belongs to the DMRL synthase family.</text>
</comment>
<protein>
    <recommendedName>
        <fullName>6,7-dimethyl-8-ribityllumazine synthase</fullName>
        <shortName>DMRL synthase</shortName>
        <shortName>LS</shortName>
        <shortName>Lumazine synthase</shortName>
        <ecNumber>2.5.1.78</ecNumber>
    </recommendedName>
</protein>
<proteinExistence type="evidence at protein level"/>
<feature type="chain" id="PRO_0000134754" description="6,7-dimethyl-8-ribityllumazine synthase">
    <location>
        <begin position="1"/>
        <end position="156"/>
    </location>
</feature>
<feature type="active site" description="Proton donor" evidence="2">
    <location>
        <position position="89"/>
    </location>
</feature>
<feature type="binding site" evidence="1">
    <location>
        <position position="22"/>
    </location>
    <ligand>
        <name>5-amino-6-(D-ribitylamino)uracil</name>
        <dbReference type="ChEBI" id="CHEBI:15934"/>
    </ligand>
</feature>
<feature type="binding site" evidence="1">
    <location>
        <begin position="57"/>
        <end position="59"/>
    </location>
    <ligand>
        <name>5-amino-6-(D-ribitylamino)uracil</name>
        <dbReference type="ChEBI" id="CHEBI:15934"/>
    </ligand>
</feature>
<feature type="binding site" evidence="1">
    <location>
        <begin position="81"/>
        <end position="83"/>
    </location>
    <ligand>
        <name>5-amino-6-(D-ribitylamino)uracil</name>
        <dbReference type="ChEBI" id="CHEBI:15934"/>
    </ligand>
</feature>
<feature type="binding site" evidence="1">
    <location>
        <begin position="86"/>
        <end position="87"/>
    </location>
    <ligand>
        <name>(2S)-2-hydroxy-3-oxobutyl phosphate</name>
        <dbReference type="ChEBI" id="CHEBI:58830"/>
    </ligand>
</feature>
<feature type="binding site" evidence="1">
    <location>
        <position position="114"/>
    </location>
    <ligand>
        <name>5-amino-6-(D-ribitylamino)uracil</name>
        <dbReference type="ChEBI" id="CHEBI:15934"/>
    </ligand>
</feature>
<feature type="binding site" evidence="1">
    <location>
        <position position="128"/>
    </location>
    <ligand>
        <name>(2S)-2-hydroxy-3-oxobutyl phosphate</name>
        <dbReference type="ChEBI" id="CHEBI:58830"/>
    </ligand>
</feature>